<sequence>MAAKVKKGDKVVVLTGRDKGRTGEVIQVMPKENRALVRGVNLVKRHQRQTQTQEGGIISKEAAIDLSNLAVADPKDGKPTRVGFRILEDGRKVRFAKRSGDLIDG</sequence>
<accession>B0UHV8</accession>
<evidence type="ECO:0000255" key="1">
    <source>
        <dbReference type="HAMAP-Rule" id="MF_01326"/>
    </source>
</evidence>
<evidence type="ECO:0000305" key="2"/>
<keyword id="KW-0687">Ribonucleoprotein</keyword>
<keyword id="KW-0689">Ribosomal protein</keyword>
<keyword id="KW-0694">RNA-binding</keyword>
<keyword id="KW-0699">rRNA-binding</keyword>
<dbReference type="EMBL" id="CP000943">
    <property type="protein sequence ID" value="ACA14913.1"/>
    <property type="molecule type" value="Genomic_DNA"/>
</dbReference>
<dbReference type="RefSeq" id="WP_012330331.1">
    <property type="nucleotide sequence ID" value="NC_010511.1"/>
</dbReference>
<dbReference type="SMR" id="B0UHV8"/>
<dbReference type="STRING" id="426117.M446_0342"/>
<dbReference type="KEGG" id="met:M446_0342"/>
<dbReference type="eggNOG" id="COG0198">
    <property type="taxonomic scope" value="Bacteria"/>
</dbReference>
<dbReference type="HOGENOM" id="CLU_093315_2_2_5"/>
<dbReference type="GO" id="GO:1990904">
    <property type="term" value="C:ribonucleoprotein complex"/>
    <property type="evidence" value="ECO:0007669"/>
    <property type="project" value="UniProtKB-KW"/>
</dbReference>
<dbReference type="GO" id="GO:0005840">
    <property type="term" value="C:ribosome"/>
    <property type="evidence" value="ECO:0007669"/>
    <property type="project" value="UniProtKB-KW"/>
</dbReference>
<dbReference type="GO" id="GO:0019843">
    <property type="term" value="F:rRNA binding"/>
    <property type="evidence" value="ECO:0007669"/>
    <property type="project" value="UniProtKB-UniRule"/>
</dbReference>
<dbReference type="GO" id="GO:0003735">
    <property type="term" value="F:structural constituent of ribosome"/>
    <property type="evidence" value="ECO:0007669"/>
    <property type="project" value="InterPro"/>
</dbReference>
<dbReference type="GO" id="GO:0006412">
    <property type="term" value="P:translation"/>
    <property type="evidence" value="ECO:0007669"/>
    <property type="project" value="UniProtKB-UniRule"/>
</dbReference>
<dbReference type="CDD" id="cd06089">
    <property type="entry name" value="KOW_RPL26"/>
    <property type="match status" value="1"/>
</dbReference>
<dbReference type="FunFam" id="2.30.30.30:FF:000004">
    <property type="entry name" value="50S ribosomal protein L24"/>
    <property type="match status" value="1"/>
</dbReference>
<dbReference type="Gene3D" id="2.30.30.30">
    <property type="match status" value="1"/>
</dbReference>
<dbReference type="HAMAP" id="MF_01326_B">
    <property type="entry name" value="Ribosomal_uL24_B"/>
    <property type="match status" value="1"/>
</dbReference>
<dbReference type="InterPro" id="IPR005824">
    <property type="entry name" value="KOW"/>
</dbReference>
<dbReference type="InterPro" id="IPR014722">
    <property type="entry name" value="Rib_uL2_dom2"/>
</dbReference>
<dbReference type="InterPro" id="IPR003256">
    <property type="entry name" value="Ribosomal_uL24"/>
</dbReference>
<dbReference type="InterPro" id="IPR005825">
    <property type="entry name" value="Ribosomal_uL24_CS"/>
</dbReference>
<dbReference type="InterPro" id="IPR041988">
    <property type="entry name" value="Ribosomal_uL24_KOW"/>
</dbReference>
<dbReference type="InterPro" id="IPR008991">
    <property type="entry name" value="Translation_prot_SH3-like_sf"/>
</dbReference>
<dbReference type="NCBIfam" id="TIGR01079">
    <property type="entry name" value="rplX_bact"/>
    <property type="match status" value="1"/>
</dbReference>
<dbReference type="PANTHER" id="PTHR12903">
    <property type="entry name" value="MITOCHONDRIAL RIBOSOMAL PROTEIN L24"/>
    <property type="match status" value="1"/>
</dbReference>
<dbReference type="Pfam" id="PF00467">
    <property type="entry name" value="KOW"/>
    <property type="match status" value="1"/>
</dbReference>
<dbReference type="Pfam" id="PF17136">
    <property type="entry name" value="ribosomal_L24"/>
    <property type="match status" value="1"/>
</dbReference>
<dbReference type="SMART" id="SM00739">
    <property type="entry name" value="KOW"/>
    <property type="match status" value="1"/>
</dbReference>
<dbReference type="SUPFAM" id="SSF50104">
    <property type="entry name" value="Translation proteins SH3-like domain"/>
    <property type="match status" value="1"/>
</dbReference>
<dbReference type="PROSITE" id="PS01108">
    <property type="entry name" value="RIBOSOMAL_L24"/>
    <property type="match status" value="1"/>
</dbReference>
<reference key="1">
    <citation type="submission" date="2008-02" db="EMBL/GenBank/DDBJ databases">
        <title>Complete sequence of chromosome of Methylobacterium sp. 4-46.</title>
        <authorList>
            <consortium name="US DOE Joint Genome Institute"/>
            <person name="Copeland A."/>
            <person name="Lucas S."/>
            <person name="Lapidus A."/>
            <person name="Glavina del Rio T."/>
            <person name="Dalin E."/>
            <person name="Tice H."/>
            <person name="Bruce D."/>
            <person name="Goodwin L."/>
            <person name="Pitluck S."/>
            <person name="Chertkov O."/>
            <person name="Brettin T."/>
            <person name="Detter J.C."/>
            <person name="Han C."/>
            <person name="Kuske C.R."/>
            <person name="Schmutz J."/>
            <person name="Larimer F."/>
            <person name="Land M."/>
            <person name="Hauser L."/>
            <person name="Kyrpides N."/>
            <person name="Ivanova N."/>
            <person name="Marx C.J."/>
            <person name="Richardson P."/>
        </authorList>
    </citation>
    <scope>NUCLEOTIDE SEQUENCE [LARGE SCALE GENOMIC DNA]</scope>
    <source>
        <strain>4-46</strain>
    </source>
</reference>
<gene>
    <name evidence="1" type="primary">rplX</name>
    <name type="ordered locus">M446_0342</name>
</gene>
<feature type="chain" id="PRO_1000165954" description="Large ribosomal subunit protein uL24">
    <location>
        <begin position="1"/>
        <end position="105"/>
    </location>
</feature>
<proteinExistence type="inferred from homology"/>
<protein>
    <recommendedName>
        <fullName evidence="1">Large ribosomal subunit protein uL24</fullName>
    </recommendedName>
    <alternativeName>
        <fullName evidence="2">50S ribosomal protein L24</fullName>
    </alternativeName>
</protein>
<organism>
    <name type="scientific">Methylobacterium sp. (strain 4-46)</name>
    <dbReference type="NCBI Taxonomy" id="426117"/>
    <lineage>
        <taxon>Bacteria</taxon>
        <taxon>Pseudomonadati</taxon>
        <taxon>Pseudomonadota</taxon>
        <taxon>Alphaproteobacteria</taxon>
        <taxon>Hyphomicrobiales</taxon>
        <taxon>Methylobacteriaceae</taxon>
        <taxon>Methylobacterium</taxon>
    </lineage>
</organism>
<name>RL24_METS4</name>
<comment type="function">
    <text evidence="1">One of two assembly initiator proteins, it binds directly to the 5'-end of the 23S rRNA, where it nucleates assembly of the 50S subunit.</text>
</comment>
<comment type="function">
    <text evidence="1">One of the proteins that surrounds the polypeptide exit tunnel on the outside of the subunit.</text>
</comment>
<comment type="subunit">
    <text evidence="1">Part of the 50S ribosomal subunit.</text>
</comment>
<comment type="similarity">
    <text evidence="1">Belongs to the universal ribosomal protein uL24 family.</text>
</comment>